<evidence type="ECO:0000255" key="1">
    <source>
        <dbReference type="HAMAP-Rule" id="MF_00195"/>
    </source>
</evidence>
<proteinExistence type="inferred from homology"/>
<protein>
    <recommendedName>
        <fullName evidence="1">GTPase Der</fullName>
    </recommendedName>
    <alternativeName>
        <fullName evidence="1">GTP-binding protein EngA</fullName>
    </alternativeName>
</protein>
<reference key="1">
    <citation type="submission" date="2009-03" db="EMBL/GenBank/DDBJ databases">
        <title>Brucella melitensis ATCC 23457 whole genome shotgun sequencing project.</title>
        <authorList>
            <person name="Setubal J.C."/>
            <person name="Boyle S."/>
            <person name="Crasta O.R."/>
            <person name="Gillespie J.J."/>
            <person name="Kenyon R.W."/>
            <person name="Lu J."/>
            <person name="Mane S."/>
            <person name="Nagrani S."/>
            <person name="Shallom J.M."/>
            <person name="Shallom S."/>
            <person name="Shukla M."/>
            <person name="Snyder E.E."/>
            <person name="Sobral B.W."/>
            <person name="Wattam A.R."/>
            <person name="Will R."/>
            <person name="Williams K."/>
            <person name="Yoo H."/>
            <person name="Munk C."/>
            <person name="Tapia R."/>
            <person name="Han C."/>
            <person name="Detter J.C."/>
            <person name="Bruce D."/>
            <person name="Brettin T.S."/>
        </authorList>
    </citation>
    <scope>NUCLEOTIDE SEQUENCE [LARGE SCALE GENOMIC DNA]</scope>
    <source>
        <strain>ATCC 23457</strain>
    </source>
</reference>
<name>DER_BRUMB</name>
<accession>C0RH89</accession>
<gene>
    <name evidence="1" type="primary">der</name>
    <name type="synonym">engA</name>
    <name type="ordered locus">BMEA_A0412</name>
</gene>
<sequence>MGFTLAIVGRPNVGKSTLFNRLVGRKLALVDDLPGVTRDRRIHDAKLYDLKFQVIDTAGLEEAANDSLEARMRAQTEAAISEADAVLFVIDAKAGITPADSTFAEAVRRSGKPVVLVANKAEARGSEAGMYDAFQLGLGEPCPISAEHGQGMPDLRDAIVELLGEERVFAEERQEEAADEVFTPAAVGALVGDDIEDPDAEEIPAYDATKPLRIAIVGRPNAGKSTLINTMLGEDRLLTGPEAGITRDSISADWEWHGRKIKLFDTAGMRRKARVQEKLEKLSVADSLRAIRFAEVVIIVLDATIPFEKQDLQIADLIIREGRAPVIAFNKWDLIEDRQMVLADLYEKTARLLPQVRGLRAVPISGERGQGIDKLMENVVKTHEIWNRRISTGRLNRWLEGVIAHQPPPAVSGRRLKVKYMTQVKTRPPGFVVSCSRPDAMPQSYVRYLINGLRETFDMPGVPIRLSLRTSDNPFAGRAKKKK</sequence>
<keyword id="KW-0342">GTP-binding</keyword>
<keyword id="KW-0547">Nucleotide-binding</keyword>
<keyword id="KW-0677">Repeat</keyword>
<keyword id="KW-0690">Ribosome biogenesis</keyword>
<feature type="chain" id="PRO_1000124344" description="GTPase Der">
    <location>
        <begin position="1"/>
        <end position="483"/>
    </location>
</feature>
<feature type="domain" description="EngA-type G 1">
    <location>
        <begin position="3"/>
        <end position="167"/>
    </location>
</feature>
<feature type="domain" description="EngA-type G 2">
    <location>
        <begin position="212"/>
        <end position="387"/>
    </location>
</feature>
<feature type="domain" description="KH-like" evidence="1">
    <location>
        <begin position="388"/>
        <end position="472"/>
    </location>
</feature>
<feature type="binding site" evidence="1">
    <location>
        <begin position="9"/>
        <end position="16"/>
    </location>
    <ligand>
        <name>GTP</name>
        <dbReference type="ChEBI" id="CHEBI:37565"/>
        <label>1</label>
    </ligand>
</feature>
<feature type="binding site" evidence="1">
    <location>
        <begin position="56"/>
        <end position="60"/>
    </location>
    <ligand>
        <name>GTP</name>
        <dbReference type="ChEBI" id="CHEBI:37565"/>
        <label>1</label>
    </ligand>
</feature>
<feature type="binding site" evidence="1">
    <location>
        <begin position="119"/>
        <end position="122"/>
    </location>
    <ligand>
        <name>GTP</name>
        <dbReference type="ChEBI" id="CHEBI:37565"/>
        <label>1</label>
    </ligand>
</feature>
<feature type="binding site" evidence="1">
    <location>
        <begin position="218"/>
        <end position="225"/>
    </location>
    <ligand>
        <name>GTP</name>
        <dbReference type="ChEBI" id="CHEBI:37565"/>
        <label>2</label>
    </ligand>
</feature>
<feature type="binding site" evidence="1">
    <location>
        <begin position="265"/>
        <end position="269"/>
    </location>
    <ligand>
        <name>GTP</name>
        <dbReference type="ChEBI" id="CHEBI:37565"/>
        <label>2</label>
    </ligand>
</feature>
<feature type="binding site" evidence="1">
    <location>
        <begin position="330"/>
        <end position="333"/>
    </location>
    <ligand>
        <name>GTP</name>
        <dbReference type="ChEBI" id="CHEBI:37565"/>
        <label>2</label>
    </ligand>
</feature>
<organism>
    <name type="scientific">Brucella melitensis biotype 2 (strain ATCC 23457)</name>
    <dbReference type="NCBI Taxonomy" id="546272"/>
    <lineage>
        <taxon>Bacteria</taxon>
        <taxon>Pseudomonadati</taxon>
        <taxon>Pseudomonadota</taxon>
        <taxon>Alphaproteobacteria</taxon>
        <taxon>Hyphomicrobiales</taxon>
        <taxon>Brucellaceae</taxon>
        <taxon>Brucella/Ochrobactrum group</taxon>
        <taxon>Brucella</taxon>
    </lineage>
</organism>
<dbReference type="EMBL" id="CP001488">
    <property type="protein sequence ID" value="ACO00197.1"/>
    <property type="molecule type" value="Genomic_DNA"/>
</dbReference>
<dbReference type="RefSeq" id="WP_004682999.1">
    <property type="nucleotide sequence ID" value="NC_012441.1"/>
</dbReference>
<dbReference type="SMR" id="C0RH89"/>
<dbReference type="GeneID" id="29594398"/>
<dbReference type="KEGG" id="bmi:BMEA_A0412"/>
<dbReference type="HOGENOM" id="CLU_016077_5_0_5"/>
<dbReference type="Proteomes" id="UP000001748">
    <property type="component" value="Chromosome I"/>
</dbReference>
<dbReference type="GO" id="GO:0005525">
    <property type="term" value="F:GTP binding"/>
    <property type="evidence" value="ECO:0007669"/>
    <property type="project" value="UniProtKB-UniRule"/>
</dbReference>
<dbReference type="GO" id="GO:0042254">
    <property type="term" value="P:ribosome biogenesis"/>
    <property type="evidence" value="ECO:0007669"/>
    <property type="project" value="UniProtKB-KW"/>
</dbReference>
<dbReference type="CDD" id="cd01894">
    <property type="entry name" value="EngA1"/>
    <property type="match status" value="1"/>
</dbReference>
<dbReference type="CDD" id="cd01895">
    <property type="entry name" value="EngA2"/>
    <property type="match status" value="1"/>
</dbReference>
<dbReference type="FunFam" id="3.30.300.20:FF:000004">
    <property type="entry name" value="GTPase Der"/>
    <property type="match status" value="1"/>
</dbReference>
<dbReference type="FunFam" id="3.40.50.300:FF:000057">
    <property type="entry name" value="GTPase Der"/>
    <property type="match status" value="1"/>
</dbReference>
<dbReference type="Gene3D" id="3.30.300.20">
    <property type="match status" value="1"/>
</dbReference>
<dbReference type="Gene3D" id="3.40.50.300">
    <property type="entry name" value="P-loop containing nucleotide triphosphate hydrolases"/>
    <property type="match status" value="2"/>
</dbReference>
<dbReference type="HAMAP" id="MF_00195">
    <property type="entry name" value="GTPase_Der"/>
    <property type="match status" value="1"/>
</dbReference>
<dbReference type="InterPro" id="IPR031166">
    <property type="entry name" value="G_ENGA"/>
</dbReference>
<dbReference type="InterPro" id="IPR006073">
    <property type="entry name" value="GTP-bd"/>
</dbReference>
<dbReference type="InterPro" id="IPR016484">
    <property type="entry name" value="GTPase_Der"/>
</dbReference>
<dbReference type="InterPro" id="IPR032859">
    <property type="entry name" value="KH_dom-like"/>
</dbReference>
<dbReference type="InterPro" id="IPR015946">
    <property type="entry name" value="KH_dom-like_a/b"/>
</dbReference>
<dbReference type="InterPro" id="IPR027417">
    <property type="entry name" value="P-loop_NTPase"/>
</dbReference>
<dbReference type="InterPro" id="IPR005225">
    <property type="entry name" value="Small_GTP-bd"/>
</dbReference>
<dbReference type="NCBIfam" id="TIGR03594">
    <property type="entry name" value="GTPase_EngA"/>
    <property type="match status" value="1"/>
</dbReference>
<dbReference type="NCBIfam" id="TIGR00231">
    <property type="entry name" value="small_GTP"/>
    <property type="match status" value="2"/>
</dbReference>
<dbReference type="PANTHER" id="PTHR43834">
    <property type="entry name" value="GTPASE DER"/>
    <property type="match status" value="1"/>
</dbReference>
<dbReference type="PANTHER" id="PTHR43834:SF6">
    <property type="entry name" value="GTPASE DER"/>
    <property type="match status" value="1"/>
</dbReference>
<dbReference type="Pfam" id="PF14714">
    <property type="entry name" value="KH_dom-like"/>
    <property type="match status" value="1"/>
</dbReference>
<dbReference type="Pfam" id="PF01926">
    <property type="entry name" value="MMR_HSR1"/>
    <property type="match status" value="2"/>
</dbReference>
<dbReference type="PIRSF" id="PIRSF006485">
    <property type="entry name" value="GTP-binding_EngA"/>
    <property type="match status" value="1"/>
</dbReference>
<dbReference type="PRINTS" id="PR00326">
    <property type="entry name" value="GTP1OBG"/>
</dbReference>
<dbReference type="SUPFAM" id="SSF52540">
    <property type="entry name" value="P-loop containing nucleoside triphosphate hydrolases"/>
    <property type="match status" value="2"/>
</dbReference>
<dbReference type="PROSITE" id="PS51712">
    <property type="entry name" value="G_ENGA"/>
    <property type="match status" value="2"/>
</dbReference>
<comment type="function">
    <text evidence="1">GTPase that plays an essential role in the late steps of ribosome biogenesis.</text>
</comment>
<comment type="subunit">
    <text evidence="1">Associates with the 50S ribosomal subunit.</text>
</comment>
<comment type="similarity">
    <text evidence="1">Belongs to the TRAFAC class TrmE-Era-EngA-EngB-Septin-like GTPase superfamily. EngA (Der) GTPase family.</text>
</comment>